<accession>Q7W4B2</accession>
<reference key="1">
    <citation type="journal article" date="2003" name="Nat. Genet.">
        <title>Comparative analysis of the genome sequences of Bordetella pertussis, Bordetella parapertussis and Bordetella bronchiseptica.</title>
        <authorList>
            <person name="Parkhill J."/>
            <person name="Sebaihia M."/>
            <person name="Preston A."/>
            <person name="Murphy L.D."/>
            <person name="Thomson N.R."/>
            <person name="Harris D.E."/>
            <person name="Holden M.T.G."/>
            <person name="Churcher C.M."/>
            <person name="Bentley S.D."/>
            <person name="Mungall K.L."/>
            <person name="Cerdeno-Tarraga A.-M."/>
            <person name="Temple L."/>
            <person name="James K.D."/>
            <person name="Harris B."/>
            <person name="Quail M.A."/>
            <person name="Achtman M."/>
            <person name="Atkin R."/>
            <person name="Baker S."/>
            <person name="Basham D."/>
            <person name="Bason N."/>
            <person name="Cherevach I."/>
            <person name="Chillingworth T."/>
            <person name="Collins M."/>
            <person name="Cronin A."/>
            <person name="Davis P."/>
            <person name="Doggett J."/>
            <person name="Feltwell T."/>
            <person name="Goble A."/>
            <person name="Hamlin N."/>
            <person name="Hauser H."/>
            <person name="Holroyd S."/>
            <person name="Jagels K."/>
            <person name="Leather S."/>
            <person name="Moule S."/>
            <person name="Norberczak H."/>
            <person name="O'Neil S."/>
            <person name="Ormond D."/>
            <person name="Price C."/>
            <person name="Rabbinowitsch E."/>
            <person name="Rutter S."/>
            <person name="Sanders M."/>
            <person name="Saunders D."/>
            <person name="Seeger K."/>
            <person name="Sharp S."/>
            <person name="Simmonds M."/>
            <person name="Skelton J."/>
            <person name="Squares R."/>
            <person name="Squares S."/>
            <person name="Stevens K."/>
            <person name="Unwin L."/>
            <person name="Whitehead S."/>
            <person name="Barrell B.G."/>
            <person name="Maskell D.J."/>
        </authorList>
    </citation>
    <scope>NUCLEOTIDE SEQUENCE [LARGE SCALE GENOMIC DNA]</scope>
    <source>
        <strain>12822 / ATCC BAA-587 / NCTC 13253</strain>
    </source>
</reference>
<organism>
    <name type="scientific">Bordetella parapertussis (strain 12822 / ATCC BAA-587 / NCTC 13253)</name>
    <dbReference type="NCBI Taxonomy" id="257311"/>
    <lineage>
        <taxon>Bacteria</taxon>
        <taxon>Pseudomonadati</taxon>
        <taxon>Pseudomonadota</taxon>
        <taxon>Betaproteobacteria</taxon>
        <taxon>Burkholderiales</taxon>
        <taxon>Alcaligenaceae</taxon>
        <taxon>Bordetella</taxon>
    </lineage>
</organism>
<name>MURD_BORPA</name>
<keyword id="KW-0067">ATP-binding</keyword>
<keyword id="KW-0131">Cell cycle</keyword>
<keyword id="KW-0132">Cell division</keyword>
<keyword id="KW-0133">Cell shape</keyword>
<keyword id="KW-0961">Cell wall biogenesis/degradation</keyword>
<keyword id="KW-0963">Cytoplasm</keyword>
<keyword id="KW-0436">Ligase</keyword>
<keyword id="KW-0547">Nucleotide-binding</keyword>
<keyword id="KW-0573">Peptidoglycan synthesis</keyword>
<gene>
    <name evidence="1" type="primary">murD</name>
    <name type="ordered locus">BPP3754</name>
</gene>
<dbReference type="EC" id="6.3.2.9" evidence="1"/>
<dbReference type="EMBL" id="BX640434">
    <property type="protein sequence ID" value="CAE39037.1"/>
    <property type="molecule type" value="Genomic_DNA"/>
</dbReference>
<dbReference type="RefSeq" id="WP_010929229.1">
    <property type="nucleotide sequence ID" value="NC_002928.3"/>
</dbReference>
<dbReference type="SMR" id="Q7W4B2"/>
<dbReference type="GeneID" id="93205543"/>
<dbReference type="KEGG" id="bpa:BPP3754"/>
<dbReference type="HOGENOM" id="CLU_032540_1_1_4"/>
<dbReference type="UniPathway" id="UPA00219"/>
<dbReference type="Proteomes" id="UP000001421">
    <property type="component" value="Chromosome"/>
</dbReference>
<dbReference type="GO" id="GO:0005737">
    <property type="term" value="C:cytoplasm"/>
    <property type="evidence" value="ECO:0007669"/>
    <property type="project" value="UniProtKB-SubCell"/>
</dbReference>
<dbReference type="GO" id="GO:0005524">
    <property type="term" value="F:ATP binding"/>
    <property type="evidence" value="ECO:0007669"/>
    <property type="project" value="UniProtKB-UniRule"/>
</dbReference>
<dbReference type="GO" id="GO:0004326">
    <property type="term" value="F:tetrahydrofolylpolyglutamate synthase activity"/>
    <property type="evidence" value="ECO:0007669"/>
    <property type="project" value="InterPro"/>
</dbReference>
<dbReference type="GO" id="GO:0008764">
    <property type="term" value="F:UDP-N-acetylmuramoylalanine-D-glutamate ligase activity"/>
    <property type="evidence" value="ECO:0007669"/>
    <property type="project" value="UniProtKB-UniRule"/>
</dbReference>
<dbReference type="GO" id="GO:0051301">
    <property type="term" value="P:cell division"/>
    <property type="evidence" value="ECO:0007669"/>
    <property type="project" value="UniProtKB-KW"/>
</dbReference>
<dbReference type="GO" id="GO:0071555">
    <property type="term" value="P:cell wall organization"/>
    <property type="evidence" value="ECO:0007669"/>
    <property type="project" value="UniProtKB-KW"/>
</dbReference>
<dbReference type="GO" id="GO:0009252">
    <property type="term" value="P:peptidoglycan biosynthetic process"/>
    <property type="evidence" value="ECO:0007669"/>
    <property type="project" value="UniProtKB-UniRule"/>
</dbReference>
<dbReference type="GO" id="GO:0008360">
    <property type="term" value="P:regulation of cell shape"/>
    <property type="evidence" value="ECO:0007669"/>
    <property type="project" value="UniProtKB-KW"/>
</dbReference>
<dbReference type="Gene3D" id="3.90.190.20">
    <property type="entry name" value="Mur ligase, C-terminal domain"/>
    <property type="match status" value="1"/>
</dbReference>
<dbReference type="Gene3D" id="3.40.1190.10">
    <property type="entry name" value="Mur-like, catalytic domain"/>
    <property type="match status" value="1"/>
</dbReference>
<dbReference type="Gene3D" id="3.40.50.720">
    <property type="entry name" value="NAD(P)-binding Rossmann-like Domain"/>
    <property type="match status" value="1"/>
</dbReference>
<dbReference type="HAMAP" id="MF_00639">
    <property type="entry name" value="MurD"/>
    <property type="match status" value="1"/>
</dbReference>
<dbReference type="InterPro" id="IPR018109">
    <property type="entry name" value="Folylpolyglutamate_synth_CS"/>
</dbReference>
<dbReference type="InterPro" id="IPR036565">
    <property type="entry name" value="Mur-like_cat_sf"/>
</dbReference>
<dbReference type="InterPro" id="IPR004101">
    <property type="entry name" value="Mur_ligase_C"/>
</dbReference>
<dbReference type="InterPro" id="IPR036615">
    <property type="entry name" value="Mur_ligase_C_dom_sf"/>
</dbReference>
<dbReference type="InterPro" id="IPR013221">
    <property type="entry name" value="Mur_ligase_cen"/>
</dbReference>
<dbReference type="InterPro" id="IPR005762">
    <property type="entry name" value="MurD"/>
</dbReference>
<dbReference type="NCBIfam" id="TIGR01087">
    <property type="entry name" value="murD"/>
    <property type="match status" value="1"/>
</dbReference>
<dbReference type="PANTHER" id="PTHR43692">
    <property type="entry name" value="UDP-N-ACETYLMURAMOYLALANINE--D-GLUTAMATE LIGASE"/>
    <property type="match status" value="1"/>
</dbReference>
<dbReference type="PANTHER" id="PTHR43692:SF1">
    <property type="entry name" value="UDP-N-ACETYLMURAMOYLALANINE--D-GLUTAMATE LIGASE"/>
    <property type="match status" value="1"/>
</dbReference>
<dbReference type="Pfam" id="PF02875">
    <property type="entry name" value="Mur_ligase_C"/>
    <property type="match status" value="1"/>
</dbReference>
<dbReference type="Pfam" id="PF08245">
    <property type="entry name" value="Mur_ligase_M"/>
    <property type="match status" value="1"/>
</dbReference>
<dbReference type="Pfam" id="PF21799">
    <property type="entry name" value="MurD-like_N"/>
    <property type="match status" value="1"/>
</dbReference>
<dbReference type="SUPFAM" id="SSF51984">
    <property type="entry name" value="MurCD N-terminal domain"/>
    <property type="match status" value="1"/>
</dbReference>
<dbReference type="SUPFAM" id="SSF53623">
    <property type="entry name" value="MurD-like peptide ligases, catalytic domain"/>
    <property type="match status" value="1"/>
</dbReference>
<dbReference type="SUPFAM" id="SSF53244">
    <property type="entry name" value="MurD-like peptide ligases, peptide-binding domain"/>
    <property type="match status" value="1"/>
</dbReference>
<sequence>MNTTETSRAAAPLVLILGLGETGVAAARWCARQGSPLRVADTRAQPGGLAALQAALADATVEYRLGCGEQFPPDLLDGVAQIVLSPGLVPHESPTRELLEQARERNVEVVGEIELFARALAGLAESREYRPRVLAITGTNGKTTVTALTRQLIEAGGMSARAAGNISPAALAALIDALDQDDLPQVWVLELSSFQLETTRTLAPDAAVVLNVTQDHLDWHGDMQAYAQAKARILKPARLAIVNRDDPLTVAMVESLQALNVRSFGRDVPALVGDMGLELGQGVAWLTACESNDFDEPAPRRKKDAPPPTRAGGRMSRLMPVDALRIRGVHNALNALAAMQLARSLDLGWGPMLRTLRDYAGEPHRAELVRSIGDVDYINDSKGTNVGATVAALEGLGQQVVLIAGGQGKGQDFSPLVPVVRRHARAVVLIGVDGAAIGKVLEPTGVPCVAAADMREAVRRAAELAQPGDAVLLSPACASFDMFRNYPHRGEVFAAEVQELALDRGEVA</sequence>
<evidence type="ECO:0000255" key="1">
    <source>
        <dbReference type="HAMAP-Rule" id="MF_00639"/>
    </source>
</evidence>
<evidence type="ECO:0000256" key="2">
    <source>
        <dbReference type="SAM" id="MobiDB-lite"/>
    </source>
</evidence>
<protein>
    <recommendedName>
        <fullName evidence="1">UDP-N-acetylmuramoylalanine--D-glutamate ligase</fullName>
        <ecNumber evidence="1">6.3.2.9</ecNumber>
    </recommendedName>
    <alternativeName>
        <fullName evidence="1">D-glutamic acid-adding enzyme</fullName>
    </alternativeName>
    <alternativeName>
        <fullName evidence="1">UDP-N-acetylmuramoyl-L-alanyl-D-glutamate synthetase</fullName>
    </alternativeName>
</protein>
<comment type="function">
    <text evidence="1">Cell wall formation. Catalyzes the addition of glutamate to the nucleotide precursor UDP-N-acetylmuramoyl-L-alanine (UMA).</text>
</comment>
<comment type="catalytic activity">
    <reaction evidence="1">
        <text>UDP-N-acetyl-alpha-D-muramoyl-L-alanine + D-glutamate + ATP = UDP-N-acetyl-alpha-D-muramoyl-L-alanyl-D-glutamate + ADP + phosphate + H(+)</text>
        <dbReference type="Rhea" id="RHEA:16429"/>
        <dbReference type="ChEBI" id="CHEBI:15378"/>
        <dbReference type="ChEBI" id="CHEBI:29986"/>
        <dbReference type="ChEBI" id="CHEBI:30616"/>
        <dbReference type="ChEBI" id="CHEBI:43474"/>
        <dbReference type="ChEBI" id="CHEBI:83898"/>
        <dbReference type="ChEBI" id="CHEBI:83900"/>
        <dbReference type="ChEBI" id="CHEBI:456216"/>
        <dbReference type="EC" id="6.3.2.9"/>
    </reaction>
</comment>
<comment type="pathway">
    <text evidence="1">Cell wall biogenesis; peptidoglycan biosynthesis.</text>
</comment>
<comment type="subcellular location">
    <subcellularLocation>
        <location evidence="1">Cytoplasm</location>
    </subcellularLocation>
</comment>
<comment type="similarity">
    <text evidence="1">Belongs to the MurCDEF family.</text>
</comment>
<feature type="chain" id="PRO_0000108977" description="UDP-N-acetylmuramoylalanine--D-glutamate ligase">
    <location>
        <begin position="1"/>
        <end position="508"/>
    </location>
</feature>
<feature type="region of interest" description="Disordered" evidence="2">
    <location>
        <begin position="294"/>
        <end position="314"/>
    </location>
</feature>
<feature type="binding site" evidence="1">
    <location>
        <begin position="138"/>
        <end position="144"/>
    </location>
    <ligand>
        <name>ATP</name>
        <dbReference type="ChEBI" id="CHEBI:30616"/>
    </ligand>
</feature>
<proteinExistence type="inferred from homology"/>